<reference key="1">
    <citation type="journal article" date="1989" name="J. Gen. Virol.">
        <title>Sequence analyses of Thogoto viral RNA segment 3: evidence for a distant relationship between an arbovirus and members of the Orthomyxoviridae.</title>
        <authorList>
            <person name="Staunton D."/>
            <person name="Nuttall P.A."/>
            <person name="Bishop D.H.L."/>
        </authorList>
    </citation>
    <scope>NUCLEOTIDE SEQUENCE [GENOMIC DNA]</scope>
</reference>
<reference key="2">
    <citation type="journal article" date="1997" name="Virus Res.">
        <title>The fourth genus in the Orthomyxoviridae: sequence analyses of two Thogoto virus polymerase proteins and comparison with influenza viruses.</title>
        <authorList>
            <person name="Leahy M.B."/>
            <person name="Dessens J.T."/>
            <person name="Weber F."/>
            <person name="Kochs G."/>
            <person name="Nuttall P.A."/>
        </authorList>
    </citation>
    <scope>NUCLEOTIDE SEQUENCE [MRNA]</scope>
</reference>
<name>PA_THOGV</name>
<proteinExistence type="evidence at protein level"/>
<feature type="chain" id="PRO_0000078811" description="Polymerase acidic protein">
    <location>
        <begin position="1"/>
        <end position="622"/>
    </location>
</feature>
<feature type="sequence conflict" description="In Ref. 1; BAA00429." evidence="3" ref="1">
    <original>D</original>
    <variation>N</variation>
    <location>
        <position position="190"/>
    </location>
</feature>
<feature type="sequence conflict" description="In Ref. 1; BAA00429." evidence="3" ref="1">
    <original>SPWRALLLGAD</original>
    <variation>AHGGLYCWE</variation>
    <location>
        <begin position="226"/>
        <end position="236"/>
    </location>
</feature>
<feature type="sequence conflict" description="In Ref. 1; BAA00429." evidence="3" ref="1">
    <original>V</original>
    <variation>E</variation>
    <location>
        <position position="241"/>
    </location>
</feature>
<feature type="sequence conflict" description="In Ref. 1; BAA00429." evidence="3" ref="1">
    <original>GTDQEAISWIHSQSEIECIRESKSTPASVITCLTSSLQSFAEGNPVRSRIHEDII</original>
    <variation>EQTKRPSLGYTLSLRLNALGNQIYPSISHHLPNVKPSIICRGEPVDL</variation>
    <location>
        <begin position="245"/>
        <end position="299"/>
    </location>
</feature>
<feature type="sequence conflict" description="In Ref. 1; BAA00429." evidence="3" ref="1">
    <location>
        <position position="310"/>
    </location>
</feature>
<feature type="sequence conflict" description="In Ref. 1; BAA00429." evidence="3" ref="1">
    <original>E</original>
    <variation>V</variation>
    <location>
        <position position="377"/>
    </location>
</feature>
<feature type="sequence conflict" description="In Ref. 1; BAA00429." evidence="3" ref="1">
    <original>A</original>
    <variation>V</variation>
    <location>
        <position position="394"/>
    </location>
</feature>
<feature type="sequence conflict" description="In Ref. 1; BAA00429." evidence="3" ref="1">
    <original>DRSR</original>
    <variation>EIVAE</variation>
    <location>
        <begin position="405"/>
        <end position="408"/>
    </location>
</feature>
<feature type="sequence conflict" description="In Ref. 1; BAA00429." evidence="3" ref="1">
    <original>VEG</original>
    <variation>EE</variation>
    <location>
        <begin position="469"/>
        <end position="471"/>
    </location>
</feature>
<feature type="sequence conflict" description="In Ref. 1; BAA00429." evidence="3" ref="1">
    <original>N</original>
    <variation>G</variation>
    <location>
        <position position="493"/>
    </location>
</feature>
<feature type="sequence conflict" description="In Ref. 1; BAA00429." evidence="3" ref="1">
    <original>W</original>
    <variation>R</variation>
    <location>
        <position position="543"/>
    </location>
</feature>
<feature type="sequence conflict" description="In Ref. 1; BAA00429." evidence="3" ref="1">
    <original>R</original>
    <variation>E</variation>
    <location>
        <position position="576"/>
    </location>
</feature>
<feature type="sequence conflict" description="In Ref. 1; BAA00429." evidence="3" ref="1">
    <original>NECIINNPIVAYLAKGWNSMPNVYY</original>
    <variation>SLFGKRLEQHA</variation>
    <location>
        <begin position="598"/>
        <end position="622"/>
    </location>
</feature>
<feature type="strand" evidence="4">
    <location>
        <begin position="6"/>
        <end position="8"/>
    </location>
</feature>
<feature type="helix" evidence="4">
    <location>
        <begin position="10"/>
        <end position="15"/>
    </location>
</feature>
<feature type="turn" evidence="4">
    <location>
        <begin position="16"/>
        <end position="19"/>
    </location>
</feature>
<feature type="strand" evidence="4">
    <location>
        <begin position="22"/>
        <end position="27"/>
    </location>
</feature>
<feature type="helix" evidence="4">
    <location>
        <begin position="28"/>
        <end position="45"/>
    </location>
</feature>
<feature type="strand" evidence="6">
    <location>
        <begin position="46"/>
        <end position="48"/>
    </location>
</feature>
<feature type="strand" evidence="7">
    <location>
        <begin position="50"/>
        <end position="59"/>
    </location>
</feature>
<feature type="strand" evidence="5">
    <location>
        <begin position="61"/>
        <end position="63"/>
    </location>
</feature>
<feature type="helix" evidence="7">
    <location>
        <begin position="65"/>
        <end position="73"/>
    </location>
</feature>
<feature type="helix" evidence="7">
    <location>
        <begin position="74"/>
        <end position="76"/>
    </location>
</feature>
<feature type="helix" evidence="7">
    <location>
        <begin position="81"/>
        <end position="83"/>
    </location>
</feature>
<feature type="strand" evidence="7">
    <location>
        <begin position="86"/>
        <end position="89"/>
    </location>
</feature>
<feature type="strand" evidence="4">
    <location>
        <begin position="90"/>
        <end position="92"/>
    </location>
</feature>
<feature type="strand" evidence="4">
    <location>
        <begin position="95"/>
        <end position="100"/>
    </location>
</feature>
<feature type="helix" evidence="4">
    <location>
        <begin position="104"/>
        <end position="106"/>
    </location>
</feature>
<feature type="strand" evidence="4">
    <location>
        <begin position="112"/>
        <end position="119"/>
    </location>
</feature>
<feature type="strand" evidence="7">
    <location>
        <begin position="121"/>
        <end position="123"/>
    </location>
</feature>
<feature type="helix" evidence="4">
    <location>
        <begin position="127"/>
        <end position="132"/>
    </location>
</feature>
<feature type="helix" evidence="4">
    <location>
        <begin position="135"/>
        <end position="154"/>
    </location>
</feature>
<feature type="helix" evidence="4">
    <location>
        <begin position="158"/>
        <end position="165"/>
    </location>
</feature>
<feature type="helix" evidence="4">
    <location>
        <begin position="177"/>
        <end position="183"/>
    </location>
</feature>
<feature type="turn" evidence="4">
    <location>
        <begin position="184"/>
        <end position="186"/>
    </location>
</feature>
<feature type="strand" evidence="4">
    <location>
        <begin position="223"/>
        <end position="225"/>
    </location>
</feature>
<feature type="strand" evidence="4">
    <location>
        <begin position="230"/>
        <end position="232"/>
    </location>
</feature>
<feature type="helix" evidence="4">
    <location>
        <begin position="234"/>
        <end position="236"/>
    </location>
</feature>
<feature type="strand" evidence="4">
    <location>
        <begin position="240"/>
        <end position="242"/>
    </location>
</feature>
<feature type="helix" evidence="4">
    <location>
        <begin position="247"/>
        <end position="256"/>
    </location>
</feature>
<feature type="strand" evidence="4">
    <location>
        <begin position="258"/>
        <end position="264"/>
    </location>
</feature>
<feature type="strand" evidence="4">
    <location>
        <begin position="267"/>
        <end position="269"/>
    </location>
</feature>
<feature type="helix" evidence="4">
    <location>
        <begin position="271"/>
        <end position="273"/>
    </location>
</feature>
<feature type="helix" evidence="4">
    <location>
        <begin position="274"/>
        <end position="285"/>
    </location>
</feature>
<feature type="strand" evidence="4">
    <location>
        <begin position="289"/>
        <end position="291"/>
    </location>
</feature>
<feature type="helix" evidence="4">
    <location>
        <begin position="297"/>
        <end position="301"/>
    </location>
</feature>
<feature type="turn" evidence="4">
    <location>
        <begin position="302"/>
        <end position="304"/>
    </location>
</feature>
<feature type="helix" evidence="4">
    <location>
        <begin position="305"/>
        <end position="315"/>
    </location>
</feature>
<feature type="helix" evidence="4">
    <location>
        <begin position="336"/>
        <end position="344"/>
    </location>
</feature>
<feature type="helix" evidence="4">
    <location>
        <begin position="363"/>
        <end position="380"/>
    </location>
</feature>
<feature type="helix" evidence="4">
    <location>
        <begin position="383"/>
        <end position="400"/>
    </location>
</feature>
<feature type="strand" evidence="7">
    <location>
        <begin position="402"/>
        <end position="404"/>
    </location>
</feature>
<feature type="strand" evidence="4">
    <location>
        <begin position="406"/>
        <end position="417"/>
    </location>
</feature>
<feature type="strand" evidence="4">
    <location>
        <begin position="423"/>
        <end position="431"/>
    </location>
</feature>
<feature type="strand" evidence="4">
    <location>
        <begin position="441"/>
        <end position="452"/>
    </location>
</feature>
<feature type="turn" evidence="4">
    <location>
        <begin position="456"/>
        <end position="458"/>
    </location>
</feature>
<feature type="strand" evidence="4">
    <location>
        <begin position="463"/>
        <end position="469"/>
    </location>
</feature>
<feature type="strand" evidence="4">
    <location>
        <begin position="472"/>
        <end position="484"/>
    </location>
</feature>
<feature type="helix" evidence="4">
    <location>
        <begin position="485"/>
        <end position="491"/>
    </location>
</feature>
<feature type="helix" evidence="4">
    <location>
        <begin position="492"/>
        <end position="498"/>
    </location>
</feature>
<feature type="helix" evidence="4">
    <location>
        <begin position="499"/>
        <end position="516"/>
    </location>
</feature>
<feature type="strand" evidence="4">
    <location>
        <begin position="526"/>
        <end position="531"/>
    </location>
</feature>
<feature type="strand" evidence="4">
    <location>
        <begin position="534"/>
        <end position="539"/>
    </location>
</feature>
<feature type="helix" evidence="4">
    <location>
        <begin position="540"/>
        <end position="556"/>
    </location>
</feature>
<feature type="helix" evidence="4">
    <location>
        <begin position="560"/>
        <end position="580"/>
    </location>
</feature>
<feature type="strand" evidence="4">
    <location>
        <begin position="585"/>
        <end position="587"/>
    </location>
</feature>
<feature type="helix" evidence="4">
    <location>
        <begin position="593"/>
        <end position="598"/>
    </location>
</feature>
<feature type="helix" evidence="4">
    <location>
        <begin position="605"/>
        <end position="616"/>
    </location>
</feature>
<organism>
    <name type="scientific">Thogoto virus (isolate SiAr 126)</name>
    <name type="common">Tho</name>
    <dbReference type="NCBI Taxonomy" id="126796"/>
    <lineage>
        <taxon>Viruses</taxon>
        <taxon>Riboviria</taxon>
        <taxon>Orthornavirae</taxon>
        <taxon>Negarnaviricota</taxon>
        <taxon>Polyploviricotina</taxon>
        <taxon>Insthoviricetes</taxon>
        <taxon>Articulavirales</taxon>
        <taxon>Orthomyxoviridae</taxon>
        <taxon>Thogotovirus</taxon>
        <taxon>Thogotovirus thogotoense</taxon>
    </lineage>
</organism>
<dbReference type="EMBL" id="D00540">
    <property type="protein sequence ID" value="BAA00429.1"/>
    <property type="molecule type" value="Genomic_RNA"/>
</dbReference>
<dbReference type="EMBL" id="AF006073">
    <property type="protein sequence ID" value="AAB62893.1"/>
    <property type="molecule type" value="mRNA"/>
</dbReference>
<dbReference type="PIR" id="A33303">
    <property type="entry name" value="P2IVTV"/>
</dbReference>
<dbReference type="RefSeq" id="YP_145795.1">
    <property type="nucleotide sequence ID" value="NC_006496.1"/>
</dbReference>
<dbReference type="PDB" id="4CGX">
    <property type="method" value="X-ray"/>
    <property type="resolution" value="2.70 A"/>
    <property type="chains" value="A/B=1-170"/>
</dbReference>
<dbReference type="PDB" id="4CHC">
    <property type="method" value="X-ray"/>
    <property type="resolution" value="2.77 A"/>
    <property type="chains" value="A/B/C/D/E/F=1-170"/>
</dbReference>
<dbReference type="PDB" id="8P0B">
    <property type="method" value="EM"/>
    <property type="resolution" value="2.87 A"/>
    <property type="chains" value="A=1-622"/>
</dbReference>
<dbReference type="PDB" id="8P0G">
    <property type="method" value="EM"/>
    <property type="resolution" value="3.17 A"/>
    <property type="chains" value="A=1-622"/>
</dbReference>
<dbReference type="PDB" id="8P0U">
    <property type="method" value="EM"/>
    <property type="resolution" value="2.92 A"/>
    <property type="chains" value="A=1-622"/>
</dbReference>
<dbReference type="PDB" id="8Z85">
    <property type="method" value="EM"/>
    <property type="resolution" value="2.30 A"/>
    <property type="chains" value="A=1-622"/>
</dbReference>
<dbReference type="PDB" id="8Z8J">
    <property type="method" value="EM"/>
    <property type="resolution" value="3.16 A"/>
    <property type="chains" value="A=1-622"/>
</dbReference>
<dbReference type="PDB" id="8Z8N">
    <property type="method" value="EM"/>
    <property type="resolution" value="2.79 A"/>
    <property type="chains" value="A=1-622"/>
</dbReference>
<dbReference type="PDB" id="8Z8X">
    <property type="method" value="EM"/>
    <property type="resolution" value="3.06 A"/>
    <property type="chains" value="A=1-622"/>
</dbReference>
<dbReference type="PDB" id="8Z90">
    <property type="method" value="EM"/>
    <property type="resolution" value="2.87 A"/>
    <property type="chains" value="A=1-622"/>
</dbReference>
<dbReference type="PDB" id="8Z97">
    <property type="method" value="EM"/>
    <property type="resolution" value="2.65 A"/>
    <property type="chains" value="A=1-622"/>
</dbReference>
<dbReference type="PDB" id="8Z98">
    <property type="method" value="EM"/>
    <property type="resolution" value="2.52 A"/>
    <property type="chains" value="A=1-622"/>
</dbReference>
<dbReference type="PDB" id="8Z9H">
    <property type="method" value="EM"/>
    <property type="resolution" value="2.70 A"/>
    <property type="chains" value="A/H=1-622"/>
</dbReference>
<dbReference type="PDB" id="8Z9Q">
    <property type="method" value="EM"/>
    <property type="resolution" value="2.33 A"/>
    <property type="chains" value="A=1-622"/>
</dbReference>
<dbReference type="PDB" id="8Z9R">
    <property type="method" value="EM"/>
    <property type="resolution" value="2.58 A"/>
    <property type="chains" value="A/H=1-622"/>
</dbReference>
<dbReference type="PDBsum" id="4CGX"/>
<dbReference type="PDBsum" id="4CHC"/>
<dbReference type="PDBsum" id="8P0B"/>
<dbReference type="PDBsum" id="8P0G"/>
<dbReference type="PDBsum" id="8P0U"/>
<dbReference type="PDBsum" id="8Z85"/>
<dbReference type="PDBsum" id="8Z8J"/>
<dbReference type="PDBsum" id="8Z8N"/>
<dbReference type="PDBsum" id="8Z8X"/>
<dbReference type="PDBsum" id="8Z90"/>
<dbReference type="PDBsum" id="8Z97"/>
<dbReference type="PDBsum" id="8Z98"/>
<dbReference type="PDBsum" id="8Z9H"/>
<dbReference type="PDBsum" id="8Z9Q"/>
<dbReference type="PDBsum" id="8Z9R"/>
<dbReference type="EMDB" id="EMD-17332"/>
<dbReference type="EMDB" id="EMD-17333"/>
<dbReference type="EMDB" id="EMD-17338"/>
<dbReference type="EMDB" id="EMD-39838"/>
<dbReference type="EMDB" id="EMD-39848"/>
<dbReference type="EMDB" id="EMD-39849"/>
<dbReference type="EMDB" id="EMD-39850"/>
<dbReference type="EMDB" id="EMD-39852"/>
<dbReference type="EMDB" id="EMD-39855"/>
<dbReference type="EMDB" id="EMD-39856"/>
<dbReference type="EMDB" id="EMD-39862"/>
<dbReference type="EMDB" id="EMD-39867"/>
<dbReference type="EMDB" id="EMD-39868"/>
<dbReference type="SMR" id="P27194"/>
<dbReference type="KEGG" id="vg:5075734"/>
<dbReference type="EvolutionaryTrace" id="P27194"/>
<dbReference type="Proteomes" id="UP000008973">
    <property type="component" value="Genome"/>
</dbReference>
<dbReference type="GO" id="GO:0042025">
    <property type="term" value="C:host cell nucleus"/>
    <property type="evidence" value="ECO:0007669"/>
    <property type="project" value="UniProtKB-SubCell"/>
</dbReference>
<dbReference type="GO" id="GO:0044423">
    <property type="term" value="C:virion component"/>
    <property type="evidence" value="ECO:0007669"/>
    <property type="project" value="UniProtKB-KW"/>
</dbReference>
<dbReference type="GO" id="GO:0003723">
    <property type="term" value="F:RNA binding"/>
    <property type="evidence" value="ECO:0007669"/>
    <property type="project" value="InterPro"/>
</dbReference>
<dbReference type="GO" id="GO:0039694">
    <property type="term" value="P:viral RNA genome replication"/>
    <property type="evidence" value="ECO:0007669"/>
    <property type="project" value="InterPro"/>
</dbReference>
<dbReference type="Gene3D" id="3.40.91.90">
    <property type="entry name" value="Influenza RNA-dependent RNA polymerase subunit PA, endonuclease domain"/>
    <property type="match status" value="1"/>
</dbReference>
<dbReference type="InterPro" id="IPR001009">
    <property type="entry name" value="PA/PA-X"/>
</dbReference>
<dbReference type="InterPro" id="IPR038372">
    <property type="entry name" value="PA/PA-X_sf"/>
</dbReference>
<dbReference type="Pfam" id="PF00603">
    <property type="entry name" value="Flu_PA"/>
    <property type="match status" value="1"/>
</dbReference>
<gene>
    <name type="ordered locus">Segment 3</name>
</gene>
<evidence type="ECO:0000250" key="1">
    <source>
        <dbReference type="UniProtKB" id="P03431"/>
    </source>
</evidence>
<evidence type="ECO:0000250" key="2">
    <source>
        <dbReference type="UniProtKB" id="P03433"/>
    </source>
</evidence>
<evidence type="ECO:0000305" key="3"/>
<evidence type="ECO:0007829" key="4">
    <source>
        <dbReference type="PDB" id="8Z85"/>
    </source>
</evidence>
<evidence type="ECO:0007829" key="5">
    <source>
        <dbReference type="PDB" id="8Z8N"/>
    </source>
</evidence>
<evidence type="ECO:0007829" key="6">
    <source>
        <dbReference type="PDB" id="8Z9H"/>
    </source>
</evidence>
<evidence type="ECO:0007829" key="7">
    <source>
        <dbReference type="PDB" id="8Z9Q"/>
    </source>
</evidence>
<comment type="function">
    <text evidence="2">subunit of the RNA-dependent RNA polymerase which is responsible for replication and transcription of virus RNA segments. The transcription of viral mRNAs occurs by a unique mechanism called cap-snatching. 5' methylated caps of cellular mRNAs are cleaved after 10-13 nucleotides by PA. In turn, these short capped RNAs are used as primers by PB1 for transcription of viral mRNAs. During virus replication, PB1 initiates RNA synthesis and copy vRNA into complementary RNA (cRNA) which in turn serves as a template for the production of more vRNAs.</text>
</comment>
<comment type="subunit">
    <text evidence="1">RNA polymerase is composed of three subunits: PA, PB1 and PB2.</text>
</comment>
<comment type="subcellular location">
    <subcellularLocation>
        <location>Virion</location>
    </subcellularLocation>
    <subcellularLocation>
        <location evidence="3">Host nucleus</location>
    </subcellularLocation>
</comment>
<comment type="similarity">
    <text evidence="3">Belongs to the influenza viruses PA family.</text>
</comment>
<sequence>MTDRPDHIDSRVWELSETQEDWITQVHGHVRRVVECWKYTICCLISNMHTHRGAPQYDVFKWQDRSTIEWICSKKKVQYPERDTPDLYDNERAVAYKVLLVSDLSDHSPTSGIYHDLAFNLEGEAEESCALVLRGSQLQDIKGFLCRALEWVVSNNLTQEVVETISGEAKLQFSVGTTFRTLLKRDTDWDVIPTPRVEPNVPRIEGRRWTQMKKLPLLKEKEGPPSPWRALLLGADSEYIVCPPGTDQEAISWIHSQSEIECIRESKSTPASVITCLTSSLQSFAEGNPVRSRIHEDIIAFGINKKQEKKQSASSSASGEWKRAEYQVEEMSLPPWVEEEMVLLRSDQEDNWIELEKNAIYTEVDGVAEGLVDKYIEIVGRTKVASVIEKWQIAATRTFSQLHTDRSRITACPIITRDPSGNCQFWGMVLLGPHHVKRDTDNAPLLIAEIMGEDTEEKYPKHSVFSLKVEGKQFLLSLKITSFSRNKLYTFSNIRRVLIQPASIYSQVVLSRAAENNSLNLEVNPEIQLYLEGAQRGMTLYQWVRMILCLEFLMAIYNNPQMEGFLANMRRLHMSRHAMMERRQVFLPFGSRPEDKVNECIINNPIVAYLAKGWNSMPNVYY</sequence>
<protein>
    <recommendedName>
        <fullName>Polymerase acidic protein</fullName>
        <shortName>PA</shortName>
    </recommendedName>
    <alternativeName>
        <fullName>RNA-directed RNA polymerase subunit P3</fullName>
    </alternativeName>
</protein>
<keyword id="KW-0002">3D-structure</keyword>
<keyword id="KW-1048">Host nucleus</keyword>
<keyword id="KW-1185">Reference proteome</keyword>
<keyword id="KW-0946">Virion</keyword>
<accession>P27194</accession>
<accession>O41354</accession>
<organismHost>
    <name type="scientific">Amblyomma variegatum</name>
    <name type="common">Tropical bont tick</name>
    <dbReference type="NCBI Taxonomy" id="34610"/>
</organismHost>
<organismHost>
    <name type="scientific">Cavia cutleri</name>
    <name type="common">Guinea pig</name>
    <dbReference type="NCBI Taxonomy" id="10144"/>
</organismHost>
<organismHost>
    <name type="scientific">Mungos mungo</name>
    <name type="common">Banded mongoose</name>
    <dbReference type="NCBI Taxonomy" id="210652"/>
</organismHost>
<organismHost>
    <name type="scientific">Rhipicephalus appendiculatus</name>
    <name type="common">Brown ear tick</name>
    <dbReference type="NCBI Taxonomy" id="34631"/>
</organismHost>
<organismHost>
    <name type="scientific">Rhipicephalus microplus</name>
    <name type="common">Cattle tick</name>
    <name type="synonym">Boophilus microplus</name>
    <dbReference type="NCBI Taxonomy" id="6941"/>
</organismHost>